<evidence type="ECO:0000255" key="1">
    <source>
        <dbReference type="HAMAP-Rule" id="MF_00294"/>
    </source>
</evidence>
<evidence type="ECO:0000305" key="2"/>
<comment type="similarity">
    <text evidence="1">Belongs to the bacterial ribosomal protein bL33 family.</text>
</comment>
<gene>
    <name evidence="1" type="primary">rpmG</name>
    <name type="ordered locus">Saro_3188</name>
</gene>
<feature type="chain" id="PRO_0000356595" description="Large ribosomal subunit protein bL33">
    <location>
        <begin position="1"/>
        <end position="55"/>
    </location>
</feature>
<sequence length="55" mass="6477">MAKPTTVKIRLVSTADTGFFYVTKKNPRNTTEKMTFRKYDPVVRKHVEFKEAKIK</sequence>
<protein>
    <recommendedName>
        <fullName evidence="1">Large ribosomal subunit protein bL33</fullName>
    </recommendedName>
    <alternativeName>
        <fullName evidence="2">50S ribosomal protein L33</fullName>
    </alternativeName>
</protein>
<reference key="1">
    <citation type="submission" date="2006-01" db="EMBL/GenBank/DDBJ databases">
        <title>Complete sequence of Novosphingobium aromaticivorans DSM 12444.</title>
        <authorList>
            <consortium name="US DOE Joint Genome Institute"/>
            <person name="Copeland A."/>
            <person name="Lucas S."/>
            <person name="Lapidus A."/>
            <person name="Barry K."/>
            <person name="Detter J.C."/>
            <person name="Glavina T."/>
            <person name="Hammon N."/>
            <person name="Israni S."/>
            <person name="Pitluck S."/>
            <person name="Chain P."/>
            <person name="Malfatti S."/>
            <person name="Shin M."/>
            <person name="Vergez L."/>
            <person name="Schmutz J."/>
            <person name="Larimer F."/>
            <person name="Land M."/>
            <person name="Kyrpides N."/>
            <person name="Ivanova N."/>
            <person name="Fredrickson J."/>
            <person name="Balkwill D."/>
            <person name="Romine M.F."/>
            <person name="Richardson P."/>
        </authorList>
    </citation>
    <scope>NUCLEOTIDE SEQUENCE [LARGE SCALE GENOMIC DNA]</scope>
    <source>
        <strain>ATCC 700278 / DSM 12444 / CCUG 56034 / CIP 105152 / NBRC 16084 / F199</strain>
    </source>
</reference>
<dbReference type="EMBL" id="CP000248">
    <property type="protein sequence ID" value="ABD27623.1"/>
    <property type="molecule type" value="Genomic_DNA"/>
</dbReference>
<dbReference type="RefSeq" id="WP_011446825.1">
    <property type="nucleotide sequence ID" value="NC_007794.1"/>
</dbReference>
<dbReference type="SMR" id="Q2G3F0"/>
<dbReference type="STRING" id="279238.Saro_3188"/>
<dbReference type="KEGG" id="nar:Saro_3188"/>
<dbReference type="eggNOG" id="COG0267">
    <property type="taxonomic scope" value="Bacteria"/>
</dbReference>
<dbReference type="HOGENOM" id="CLU_190949_1_1_5"/>
<dbReference type="Proteomes" id="UP000009134">
    <property type="component" value="Chromosome"/>
</dbReference>
<dbReference type="GO" id="GO:0022625">
    <property type="term" value="C:cytosolic large ribosomal subunit"/>
    <property type="evidence" value="ECO:0007669"/>
    <property type="project" value="TreeGrafter"/>
</dbReference>
<dbReference type="GO" id="GO:0003735">
    <property type="term" value="F:structural constituent of ribosome"/>
    <property type="evidence" value="ECO:0007669"/>
    <property type="project" value="InterPro"/>
</dbReference>
<dbReference type="GO" id="GO:0006412">
    <property type="term" value="P:translation"/>
    <property type="evidence" value="ECO:0007669"/>
    <property type="project" value="UniProtKB-UniRule"/>
</dbReference>
<dbReference type="Gene3D" id="2.20.28.120">
    <property type="entry name" value="Ribosomal protein L33"/>
    <property type="match status" value="1"/>
</dbReference>
<dbReference type="HAMAP" id="MF_00294">
    <property type="entry name" value="Ribosomal_bL33"/>
    <property type="match status" value="1"/>
</dbReference>
<dbReference type="InterPro" id="IPR001705">
    <property type="entry name" value="Ribosomal_bL33"/>
</dbReference>
<dbReference type="InterPro" id="IPR018264">
    <property type="entry name" value="Ribosomal_bL33_CS"/>
</dbReference>
<dbReference type="InterPro" id="IPR038584">
    <property type="entry name" value="Ribosomal_bL33_sf"/>
</dbReference>
<dbReference type="InterPro" id="IPR011332">
    <property type="entry name" value="Ribosomal_zn-bd"/>
</dbReference>
<dbReference type="NCBIfam" id="NF001860">
    <property type="entry name" value="PRK00595.1"/>
    <property type="match status" value="1"/>
</dbReference>
<dbReference type="NCBIfam" id="TIGR01023">
    <property type="entry name" value="rpmG_bact"/>
    <property type="match status" value="1"/>
</dbReference>
<dbReference type="PANTHER" id="PTHR15238">
    <property type="entry name" value="54S RIBOSOMAL PROTEIN L39, MITOCHONDRIAL"/>
    <property type="match status" value="1"/>
</dbReference>
<dbReference type="PANTHER" id="PTHR15238:SF1">
    <property type="entry name" value="LARGE RIBOSOMAL SUBUNIT PROTEIN BL33M"/>
    <property type="match status" value="1"/>
</dbReference>
<dbReference type="Pfam" id="PF00471">
    <property type="entry name" value="Ribosomal_L33"/>
    <property type="match status" value="1"/>
</dbReference>
<dbReference type="SUPFAM" id="SSF57829">
    <property type="entry name" value="Zn-binding ribosomal proteins"/>
    <property type="match status" value="1"/>
</dbReference>
<dbReference type="PROSITE" id="PS00582">
    <property type="entry name" value="RIBOSOMAL_L33"/>
    <property type="match status" value="1"/>
</dbReference>
<proteinExistence type="inferred from homology"/>
<accession>Q2G3F0</accession>
<name>RL33_NOVAD</name>
<keyword id="KW-1185">Reference proteome</keyword>
<keyword id="KW-0687">Ribonucleoprotein</keyword>
<keyword id="KW-0689">Ribosomal protein</keyword>
<organism>
    <name type="scientific">Novosphingobium aromaticivorans (strain ATCC 700278 / DSM 12444 / CCUG 56034 / CIP 105152 / NBRC 16084 / F199)</name>
    <dbReference type="NCBI Taxonomy" id="279238"/>
    <lineage>
        <taxon>Bacteria</taxon>
        <taxon>Pseudomonadati</taxon>
        <taxon>Pseudomonadota</taxon>
        <taxon>Alphaproteobacteria</taxon>
        <taxon>Sphingomonadales</taxon>
        <taxon>Sphingomonadaceae</taxon>
        <taxon>Novosphingobium</taxon>
    </lineage>
</organism>